<sequence length="274" mass="30035">MENIKQRIIDAFEQRDQINARTENDDLREAVRYVIDEIDRGELRVAEKVSGEWVVHQWLKKAVLLSFRLNDNDLIEGGETRFWDKVPAKFADYDSARFRAEGMRVVPPAMVRKGAFIGRNVVVMPSYVNIGAHVGEGTMVDTWATVGSCAQIGKNVHLSGGVGIGGVLEPLQANPTIIEDNCFIGARSEIVEGVIVEEGAVISMGVYIGQSTRIYDRENDRILYGRVPSGSVVVPGSLPSANGTHSLYAAIIVKRVDAKTRAKVGINALLRSAE</sequence>
<evidence type="ECO:0000255" key="1">
    <source>
        <dbReference type="HAMAP-Rule" id="MF_00811"/>
    </source>
</evidence>
<proteinExistence type="inferred from homology"/>
<organism>
    <name type="scientific">Idiomarina loihiensis (strain ATCC BAA-735 / DSM 15497 / L2-TR)</name>
    <dbReference type="NCBI Taxonomy" id="283942"/>
    <lineage>
        <taxon>Bacteria</taxon>
        <taxon>Pseudomonadati</taxon>
        <taxon>Pseudomonadota</taxon>
        <taxon>Gammaproteobacteria</taxon>
        <taxon>Alteromonadales</taxon>
        <taxon>Idiomarinaceae</taxon>
        <taxon>Idiomarina</taxon>
    </lineage>
</organism>
<accession>Q5QXS9</accession>
<dbReference type="EC" id="2.3.1.117" evidence="1"/>
<dbReference type="EMBL" id="AE017340">
    <property type="protein sequence ID" value="AAV81688.1"/>
    <property type="molecule type" value="Genomic_DNA"/>
</dbReference>
<dbReference type="RefSeq" id="WP_011234099.1">
    <property type="nucleotide sequence ID" value="NC_006512.1"/>
</dbReference>
<dbReference type="SMR" id="Q5QXS9"/>
<dbReference type="STRING" id="283942.IL0848"/>
<dbReference type="GeneID" id="41336004"/>
<dbReference type="KEGG" id="ilo:IL0848"/>
<dbReference type="eggNOG" id="COG2171">
    <property type="taxonomic scope" value="Bacteria"/>
</dbReference>
<dbReference type="HOGENOM" id="CLU_050859_0_1_6"/>
<dbReference type="OrthoDB" id="9775362at2"/>
<dbReference type="UniPathway" id="UPA00034">
    <property type="reaction ID" value="UER00019"/>
</dbReference>
<dbReference type="Proteomes" id="UP000001171">
    <property type="component" value="Chromosome"/>
</dbReference>
<dbReference type="GO" id="GO:0005737">
    <property type="term" value="C:cytoplasm"/>
    <property type="evidence" value="ECO:0007669"/>
    <property type="project" value="UniProtKB-SubCell"/>
</dbReference>
<dbReference type="GO" id="GO:0008666">
    <property type="term" value="F:2,3,4,5-tetrahydropyridine-2,6-dicarboxylate N-succinyltransferase activity"/>
    <property type="evidence" value="ECO:0007669"/>
    <property type="project" value="UniProtKB-UniRule"/>
</dbReference>
<dbReference type="GO" id="GO:0019877">
    <property type="term" value="P:diaminopimelate biosynthetic process"/>
    <property type="evidence" value="ECO:0007669"/>
    <property type="project" value="UniProtKB-UniRule"/>
</dbReference>
<dbReference type="GO" id="GO:0009089">
    <property type="term" value="P:lysine biosynthetic process via diaminopimelate"/>
    <property type="evidence" value="ECO:0007669"/>
    <property type="project" value="UniProtKB-UniRule"/>
</dbReference>
<dbReference type="CDD" id="cd03350">
    <property type="entry name" value="LbH_THP_succinylT"/>
    <property type="match status" value="1"/>
</dbReference>
<dbReference type="Gene3D" id="2.160.10.10">
    <property type="entry name" value="Hexapeptide repeat proteins"/>
    <property type="match status" value="1"/>
</dbReference>
<dbReference type="Gene3D" id="1.10.166.10">
    <property type="entry name" value="Tetrahydrodipicolinate-N-succinyltransferase, N-terminal domain"/>
    <property type="match status" value="1"/>
</dbReference>
<dbReference type="HAMAP" id="MF_00811">
    <property type="entry name" value="DapD"/>
    <property type="match status" value="1"/>
</dbReference>
<dbReference type="InterPro" id="IPR005664">
    <property type="entry name" value="DapD_Trfase_Hexpep_rpt_fam"/>
</dbReference>
<dbReference type="InterPro" id="IPR001451">
    <property type="entry name" value="Hexapep"/>
</dbReference>
<dbReference type="InterPro" id="IPR018357">
    <property type="entry name" value="Hexapep_transf_CS"/>
</dbReference>
<dbReference type="InterPro" id="IPR023180">
    <property type="entry name" value="THP_succinylTrfase_dom1"/>
</dbReference>
<dbReference type="InterPro" id="IPR037133">
    <property type="entry name" value="THP_succinylTrfase_N_sf"/>
</dbReference>
<dbReference type="InterPro" id="IPR050179">
    <property type="entry name" value="Trans_hexapeptide_repeat"/>
</dbReference>
<dbReference type="InterPro" id="IPR011004">
    <property type="entry name" value="Trimer_LpxA-like_sf"/>
</dbReference>
<dbReference type="NCBIfam" id="TIGR00965">
    <property type="entry name" value="dapD"/>
    <property type="match status" value="1"/>
</dbReference>
<dbReference type="NCBIfam" id="NF008808">
    <property type="entry name" value="PRK11830.1"/>
    <property type="match status" value="1"/>
</dbReference>
<dbReference type="PANTHER" id="PTHR43300:SF10">
    <property type="entry name" value="2,3,4,5-TETRAHYDROPYRIDINE-2,6-DICARBOXYLATE N-ACETYLTRANSFERASE"/>
    <property type="match status" value="1"/>
</dbReference>
<dbReference type="PANTHER" id="PTHR43300">
    <property type="entry name" value="ACETYLTRANSFERASE"/>
    <property type="match status" value="1"/>
</dbReference>
<dbReference type="Pfam" id="PF14602">
    <property type="entry name" value="Hexapep_2"/>
    <property type="match status" value="1"/>
</dbReference>
<dbReference type="Pfam" id="PF14805">
    <property type="entry name" value="THDPS_N_2"/>
    <property type="match status" value="1"/>
</dbReference>
<dbReference type="SUPFAM" id="SSF51161">
    <property type="entry name" value="Trimeric LpxA-like enzymes"/>
    <property type="match status" value="1"/>
</dbReference>
<dbReference type="PROSITE" id="PS00101">
    <property type="entry name" value="HEXAPEP_TRANSFERASES"/>
    <property type="match status" value="1"/>
</dbReference>
<protein>
    <recommendedName>
        <fullName evidence="1">2,3,4,5-tetrahydropyridine-2,6-dicarboxylate N-succinyltransferase</fullName>
        <ecNumber evidence="1">2.3.1.117</ecNumber>
    </recommendedName>
    <alternativeName>
        <fullName evidence="1">Tetrahydrodipicolinate N-succinyltransferase</fullName>
        <shortName evidence="1">THDP succinyltransferase</shortName>
        <shortName evidence="1">THP succinyltransferase</shortName>
        <shortName evidence="1">Tetrahydropicolinate succinylase</shortName>
    </alternativeName>
</protein>
<name>DAPD_IDILO</name>
<comment type="catalytic activity">
    <reaction evidence="1">
        <text>(S)-2,3,4,5-tetrahydrodipicolinate + succinyl-CoA + H2O = (S)-2-succinylamino-6-oxoheptanedioate + CoA</text>
        <dbReference type="Rhea" id="RHEA:17325"/>
        <dbReference type="ChEBI" id="CHEBI:15377"/>
        <dbReference type="ChEBI" id="CHEBI:15685"/>
        <dbReference type="ChEBI" id="CHEBI:16845"/>
        <dbReference type="ChEBI" id="CHEBI:57287"/>
        <dbReference type="ChEBI" id="CHEBI:57292"/>
        <dbReference type="EC" id="2.3.1.117"/>
    </reaction>
</comment>
<comment type="pathway">
    <text evidence="1">Amino-acid biosynthesis; L-lysine biosynthesis via DAP pathway; LL-2,6-diaminopimelate from (S)-tetrahydrodipicolinate (succinylase route): step 1/3.</text>
</comment>
<comment type="subunit">
    <text evidence="1">Homotrimer.</text>
</comment>
<comment type="subcellular location">
    <subcellularLocation>
        <location evidence="1">Cytoplasm</location>
    </subcellularLocation>
</comment>
<comment type="similarity">
    <text evidence="1">Belongs to the transferase hexapeptide repeat family.</text>
</comment>
<feature type="chain" id="PRO_0000196942" description="2,3,4,5-tetrahydropyridine-2,6-dicarboxylate N-succinyltransferase">
    <location>
        <begin position="1"/>
        <end position="274"/>
    </location>
</feature>
<feature type="binding site" evidence="1">
    <location>
        <position position="104"/>
    </location>
    <ligand>
        <name>substrate</name>
    </ligand>
</feature>
<feature type="binding site" evidence="1">
    <location>
        <position position="141"/>
    </location>
    <ligand>
        <name>substrate</name>
    </ligand>
</feature>
<gene>
    <name evidence="1" type="primary">dapD</name>
    <name type="ordered locus">IL0848</name>
</gene>
<keyword id="KW-0012">Acyltransferase</keyword>
<keyword id="KW-0028">Amino-acid biosynthesis</keyword>
<keyword id="KW-0963">Cytoplasm</keyword>
<keyword id="KW-0220">Diaminopimelate biosynthesis</keyword>
<keyword id="KW-0457">Lysine biosynthesis</keyword>
<keyword id="KW-1185">Reference proteome</keyword>
<keyword id="KW-0677">Repeat</keyword>
<keyword id="KW-0808">Transferase</keyword>
<reference key="1">
    <citation type="journal article" date="2004" name="Proc. Natl. Acad. Sci. U.S.A.">
        <title>Genome sequence of the deep-sea gamma-proteobacterium Idiomarina loihiensis reveals amino acid fermentation as a source of carbon and energy.</title>
        <authorList>
            <person name="Hou S."/>
            <person name="Saw J.H."/>
            <person name="Lee K.S."/>
            <person name="Freitas T.A."/>
            <person name="Belisle C."/>
            <person name="Kawarabayasi Y."/>
            <person name="Donachie S.P."/>
            <person name="Pikina A."/>
            <person name="Galperin M.Y."/>
            <person name="Koonin E.V."/>
            <person name="Makarova K.S."/>
            <person name="Omelchenko M.V."/>
            <person name="Sorokin A."/>
            <person name="Wolf Y.I."/>
            <person name="Li Q.X."/>
            <person name="Keum Y.S."/>
            <person name="Campbell S."/>
            <person name="Denery J."/>
            <person name="Aizawa S."/>
            <person name="Shibata S."/>
            <person name="Malahoff A."/>
            <person name="Alam M."/>
        </authorList>
    </citation>
    <scope>NUCLEOTIDE SEQUENCE [LARGE SCALE GENOMIC DNA]</scope>
    <source>
        <strain>ATCC BAA-735 / DSM 15497 / L2-TR</strain>
    </source>
</reference>